<evidence type="ECO:0000255" key="1">
    <source>
        <dbReference type="HAMAP-Rule" id="MF_00592"/>
    </source>
</evidence>
<evidence type="ECO:0000305" key="2"/>
<dbReference type="EC" id="4.1.2.4" evidence="1"/>
<dbReference type="EMBL" id="AE007869">
    <property type="protein sequence ID" value="AAK85953.2"/>
    <property type="status" value="ALT_INIT"/>
    <property type="molecule type" value="Genomic_DNA"/>
</dbReference>
<dbReference type="PIR" id="AF2592">
    <property type="entry name" value="AF2592"/>
</dbReference>
<dbReference type="PIR" id="H97374">
    <property type="entry name" value="H97374"/>
</dbReference>
<dbReference type="RefSeq" id="NP_353168.2">
    <property type="nucleotide sequence ID" value="NC_003062.2"/>
</dbReference>
<dbReference type="RefSeq" id="WP_010970671.1">
    <property type="nucleotide sequence ID" value="NC_003062.2"/>
</dbReference>
<dbReference type="SMR" id="Q8UJ09"/>
<dbReference type="STRING" id="176299.Atu0132"/>
<dbReference type="EnsemblBacteria" id="AAK85953">
    <property type="protein sequence ID" value="AAK85953"/>
    <property type="gene ID" value="Atu0132"/>
</dbReference>
<dbReference type="GeneID" id="1132170"/>
<dbReference type="KEGG" id="atu:Atu0132"/>
<dbReference type="PATRIC" id="fig|176299.10.peg.123"/>
<dbReference type="eggNOG" id="COG0274">
    <property type="taxonomic scope" value="Bacteria"/>
</dbReference>
<dbReference type="HOGENOM" id="CLU_053595_3_1_5"/>
<dbReference type="OrthoDB" id="6579831at2"/>
<dbReference type="UniPathway" id="UPA00002">
    <property type="reaction ID" value="UER00468"/>
</dbReference>
<dbReference type="Proteomes" id="UP000000813">
    <property type="component" value="Chromosome circular"/>
</dbReference>
<dbReference type="GO" id="GO:0005737">
    <property type="term" value="C:cytoplasm"/>
    <property type="evidence" value="ECO:0007669"/>
    <property type="project" value="UniProtKB-SubCell"/>
</dbReference>
<dbReference type="GO" id="GO:0004139">
    <property type="term" value="F:deoxyribose-phosphate aldolase activity"/>
    <property type="evidence" value="ECO:0007669"/>
    <property type="project" value="UniProtKB-UniRule"/>
</dbReference>
<dbReference type="GO" id="GO:0006018">
    <property type="term" value="P:2-deoxyribose 1-phosphate catabolic process"/>
    <property type="evidence" value="ECO:0007669"/>
    <property type="project" value="UniProtKB-UniRule"/>
</dbReference>
<dbReference type="GO" id="GO:0016052">
    <property type="term" value="P:carbohydrate catabolic process"/>
    <property type="evidence" value="ECO:0007669"/>
    <property type="project" value="TreeGrafter"/>
</dbReference>
<dbReference type="GO" id="GO:0009264">
    <property type="term" value="P:deoxyribonucleotide catabolic process"/>
    <property type="evidence" value="ECO:0007669"/>
    <property type="project" value="InterPro"/>
</dbReference>
<dbReference type="CDD" id="cd00959">
    <property type="entry name" value="DeoC"/>
    <property type="match status" value="1"/>
</dbReference>
<dbReference type="Gene3D" id="3.20.20.70">
    <property type="entry name" value="Aldolase class I"/>
    <property type="match status" value="1"/>
</dbReference>
<dbReference type="HAMAP" id="MF_00592">
    <property type="entry name" value="DeoC_type2"/>
    <property type="match status" value="1"/>
</dbReference>
<dbReference type="InterPro" id="IPR013785">
    <property type="entry name" value="Aldolase_TIM"/>
</dbReference>
<dbReference type="InterPro" id="IPR011343">
    <property type="entry name" value="DeoC"/>
</dbReference>
<dbReference type="InterPro" id="IPR002915">
    <property type="entry name" value="DeoC/FbaB/LacD_aldolase"/>
</dbReference>
<dbReference type="InterPro" id="IPR023649">
    <property type="entry name" value="DeoC_typeII"/>
</dbReference>
<dbReference type="NCBIfam" id="TIGR00126">
    <property type="entry name" value="deoC"/>
    <property type="match status" value="1"/>
</dbReference>
<dbReference type="PANTHER" id="PTHR10889">
    <property type="entry name" value="DEOXYRIBOSE-PHOSPHATE ALDOLASE"/>
    <property type="match status" value="1"/>
</dbReference>
<dbReference type="PANTHER" id="PTHR10889:SF3">
    <property type="entry name" value="DEOXYRIBOSE-PHOSPHATE ALDOLASE"/>
    <property type="match status" value="1"/>
</dbReference>
<dbReference type="Pfam" id="PF01791">
    <property type="entry name" value="DeoC"/>
    <property type="match status" value="1"/>
</dbReference>
<dbReference type="PIRSF" id="PIRSF001357">
    <property type="entry name" value="DeoC"/>
    <property type="match status" value="1"/>
</dbReference>
<dbReference type="SMART" id="SM01133">
    <property type="entry name" value="DeoC"/>
    <property type="match status" value="1"/>
</dbReference>
<dbReference type="SUPFAM" id="SSF51569">
    <property type="entry name" value="Aldolase"/>
    <property type="match status" value="1"/>
</dbReference>
<reference key="1">
    <citation type="journal article" date="2001" name="Science">
        <title>The genome of the natural genetic engineer Agrobacterium tumefaciens C58.</title>
        <authorList>
            <person name="Wood D.W."/>
            <person name="Setubal J.C."/>
            <person name="Kaul R."/>
            <person name="Monks D.E."/>
            <person name="Kitajima J.P."/>
            <person name="Okura V.K."/>
            <person name="Zhou Y."/>
            <person name="Chen L."/>
            <person name="Wood G.E."/>
            <person name="Almeida N.F. Jr."/>
            <person name="Woo L."/>
            <person name="Chen Y."/>
            <person name="Paulsen I.T."/>
            <person name="Eisen J.A."/>
            <person name="Karp P.D."/>
            <person name="Bovee D. Sr."/>
            <person name="Chapman P."/>
            <person name="Clendenning J."/>
            <person name="Deatherage G."/>
            <person name="Gillet W."/>
            <person name="Grant C."/>
            <person name="Kutyavin T."/>
            <person name="Levy R."/>
            <person name="Li M.-J."/>
            <person name="McClelland E."/>
            <person name="Palmieri A."/>
            <person name="Raymond C."/>
            <person name="Rouse G."/>
            <person name="Saenphimmachak C."/>
            <person name="Wu Z."/>
            <person name="Romero P."/>
            <person name="Gordon D."/>
            <person name="Zhang S."/>
            <person name="Yoo H."/>
            <person name="Tao Y."/>
            <person name="Biddle P."/>
            <person name="Jung M."/>
            <person name="Krespan W."/>
            <person name="Perry M."/>
            <person name="Gordon-Kamm B."/>
            <person name="Liao L."/>
            <person name="Kim S."/>
            <person name="Hendrick C."/>
            <person name="Zhao Z.-Y."/>
            <person name="Dolan M."/>
            <person name="Chumley F."/>
            <person name="Tingey S.V."/>
            <person name="Tomb J.-F."/>
            <person name="Gordon M.P."/>
            <person name="Olson M.V."/>
            <person name="Nester E.W."/>
        </authorList>
    </citation>
    <scope>NUCLEOTIDE SEQUENCE [LARGE SCALE GENOMIC DNA]</scope>
    <source>
        <strain>C58 / ATCC 33970</strain>
    </source>
</reference>
<reference key="2">
    <citation type="journal article" date="2001" name="Science">
        <title>Genome sequence of the plant pathogen and biotechnology agent Agrobacterium tumefaciens C58.</title>
        <authorList>
            <person name="Goodner B."/>
            <person name="Hinkle G."/>
            <person name="Gattung S."/>
            <person name="Miller N."/>
            <person name="Blanchard M."/>
            <person name="Qurollo B."/>
            <person name="Goldman B.S."/>
            <person name="Cao Y."/>
            <person name="Askenazi M."/>
            <person name="Halling C."/>
            <person name="Mullin L."/>
            <person name="Houmiel K."/>
            <person name="Gordon J."/>
            <person name="Vaudin M."/>
            <person name="Iartchouk O."/>
            <person name="Epp A."/>
            <person name="Liu F."/>
            <person name="Wollam C."/>
            <person name="Allinger M."/>
            <person name="Doughty D."/>
            <person name="Scott C."/>
            <person name="Lappas C."/>
            <person name="Markelz B."/>
            <person name="Flanagan C."/>
            <person name="Crowell C."/>
            <person name="Gurson J."/>
            <person name="Lomo C."/>
            <person name="Sear C."/>
            <person name="Strub G."/>
            <person name="Cielo C."/>
            <person name="Slater S."/>
        </authorList>
    </citation>
    <scope>NUCLEOTIDE SEQUENCE [LARGE SCALE GENOMIC DNA]</scope>
    <source>
        <strain>C58 / ATCC 33970</strain>
    </source>
</reference>
<keyword id="KW-0963">Cytoplasm</keyword>
<keyword id="KW-0456">Lyase</keyword>
<keyword id="KW-1185">Reference proteome</keyword>
<keyword id="KW-0704">Schiff base</keyword>
<accession>Q8UJ09</accession>
<protein>
    <recommendedName>
        <fullName evidence="1">Deoxyribose-phosphate aldolase</fullName>
        <shortName evidence="1">DERA</shortName>
        <ecNumber evidence="1">4.1.2.4</ecNumber>
    </recommendedName>
    <alternativeName>
        <fullName evidence="1">2-deoxy-D-ribose 5-phosphate aldolase</fullName>
    </alternativeName>
    <alternativeName>
        <fullName evidence="1">Phosphodeoxyriboaldolase</fullName>
        <shortName evidence="1">Deoxyriboaldolase</shortName>
    </alternativeName>
</protein>
<gene>
    <name evidence="1" type="primary">deoC</name>
    <name type="ordered locus">Atu0132</name>
    <name type="ORF">AGR_C_211</name>
</gene>
<comment type="function">
    <text evidence="1">Catalyzes a reversible aldol reaction between acetaldehyde and D-glyceraldehyde 3-phosphate to generate 2-deoxy-D-ribose 5-phosphate.</text>
</comment>
<comment type="catalytic activity">
    <reaction evidence="1">
        <text>2-deoxy-D-ribose 5-phosphate = D-glyceraldehyde 3-phosphate + acetaldehyde</text>
        <dbReference type="Rhea" id="RHEA:12821"/>
        <dbReference type="ChEBI" id="CHEBI:15343"/>
        <dbReference type="ChEBI" id="CHEBI:59776"/>
        <dbReference type="ChEBI" id="CHEBI:62877"/>
        <dbReference type="EC" id="4.1.2.4"/>
    </reaction>
</comment>
<comment type="pathway">
    <text evidence="1">Carbohydrate degradation; 2-deoxy-D-ribose 1-phosphate degradation; D-glyceraldehyde 3-phosphate and acetaldehyde from 2-deoxy-alpha-D-ribose 1-phosphate: step 2/2.</text>
</comment>
<comment type="subcellular location">
    <subcellularLocation>
        <location evidence="1">Cytoplasm</location>
    </subcellularLocation>
</comment>
<comment type="similarity">
    <text evidence="1 2">Belongs to the DeoC/FbaB aldolase family. DeoC type 2 subfamily.</text>
</comment>
<comment type="sequence caution" evidence="2">
    <conflict type="erroneous initiation">
        <sequence resource="EMBL-CDS" id="AAK85953"/>
    </conflict>
</comment>
<sequence length="259" mass="27478">MTMELQRPREAAALTLSLLDLTNLREDCTPQQIATLCQRAHTEFGNTAAICIWPRFVAQARAAFGKDHTIRIATVVNFPSGDLDVATVVAETEAAIGDGADEIDLVIPYRKFMAGDESAVAEMIAAVRKACAAPVLLKVILETGELKDKALIRRASEIAIAEGADFIKTSTGKVAVNATLEAADIMLQAIRDSKKKVGFKPAGGIGTVEDATLYLRLAETIMAPNWAMPSTFRFGASGVLDDVLNVLAGGEPAKAASGY</sequence>
<proteinExistence type="inferred from homology"/>
<organism>
    <name type="scientific">Agrobacterium fabrum (strain C58 / ATCC 33970)</name>
    <name type="common">Agrobacterium tumefaciens (strain C58)</name>
    <dbReference type="NCBI Taxonomy" id="176299"/>
    <lineage>
        <taxon>Bacteria</taxon>
        <taxon>Pseudomonadati</taxon>
        <taxon>Pseudomonadota</taxon>
        <taxon>Alphaproteobacteria</taxon>
        <taxon>Hyphomicrobiales</taxon>
        <taxon>Rhizobiaceae</taxon>
        <taxon>Rhizobium/Agrobacterium group</taxon>
        <taxon>Agrobacterium</taxon>
        <taxon>Agrobacterium tumefaciens complex</taxon>
    </lineage>
</organism>
<name>DEOC_AGRFC</name>
<feature type="chain" id="PRO_0000057294" description="Deoxyribose-phosphate aldolase">
    <location>
        <begin position="1"/>
        <end position="259"/>
    </location>
</feature>
<feature type="active site" description="Proton donor/acceptor" evidence="1">
    <location>
        <position position="104"/>
    </location>
</feature>
<feature type="active site" description="Schiff-base intermediate with acetaldehyde" evidence="1">
    <location>
        <position position="168"/>
    </location>
</feature>
<feature type="active site" description="Proton donor/acceptor" evidence="1">
    <location>
        <position position="200"/>
    </location>
</feature>